<feature type="peptide" id="PRO_0000376046" description="Phylloseptin-2" evidence="3">
    <location>
        <begin position="1"/>
        <end position="19"/>
    </location>
</feature>
<feature type="modified residue" description="Leucine amide" evidence="3">
    <location>
        <position position="19"/>
    </location>
</feature>
<reference evidence="5" key="1">
    <citation type="submission" date="2006-08" db="UniProtKB">
        <title>Dermaseptins and phylloseptins from Phyllomedusa tarsius (Amphibia).</title>
        <authorList>
            <person name="Prates M.V."/>
            <person name="Jardim D.P."/>
            <person name="Silva L.P."/>
            <person name="Gordo M."/>
            <person name="Leite J.R.S.A."/>
            <person name="Figueredo R.C.R."/>
            <person name="Amaral A.C."/>
            <person name="Felipe M.S.S."/>
            <person name="Bloch C. Jr."/>
        </authorList>
    </citation>
    <scope>PROTEIN SEQUENCE</scope>
    <scope>SUBCELLULAR LOCATION</scope>
    <scope>TISSUE SPECIFICITY</scope>
    <scope>MASS SPECTROMETRY</scope>
    <scope>AMIDATION AT LEU-19</scope>
    <source>
        <tissue evidence="3">Skin secretion</tissue>
    </source>
</reference>
<protein>
    <recommendedName>
        <fullName evidence="4">Phylloseptin-2</fullName>
        <shortName evidence="4">PStar 02</shortName>
    </recommendedName>
</protein>
<comment type="function">
    <text evidence="1">Has antimicrobial activity.</text>
</comment>
<comment type="subcellular location">
    <subcellularLocation>
        <location evidence="3">Secreted</location>
    </subcellularLocation>
</comment>
<comment type="tissue specificity">
    <text evidence="3">Expressed by the skin glands.</text>
</comment>
<comment type="mass spectrometry" mass="1985.21" error="0.1" method="MALDI" evidence="3"/>
<comment type="similarity">
    <text evidence="2">Belongs to the frog skin active peptide (FSAP) family. Phylloseptin subfamily.</text>
</comment>
<comment type="online information" name="The antimicrobial peptide database">
    <link uri="https://wangapd3.com/database/query_output.php?ID=02991"/>
</comment>
<organism>
    <name type="scientific">Phyllomedusa tarsius</name>
    <name type="common">Brownbelly leaf frog</name>
    <name type="synonym">Phyllomedusa tarsia</name>
    <dbReference type="NCBI Taxonomy" id="306084"/>
    <lineage>
        <taxon>Eukaryota</taxon>
        <taxon>Metazoa</taxon>
        <taxon>Chordata</taxon>
        <taxon>Craniata</taxon>
        <taxon>Vertebrata</taxon>
        <taxon>Euteleostomi</taxon>
        <taxon>Amphibia</taxon>
        <taxon>Batrachia</taxon>
        <taxon>Anura</taxon>
        <taxon>Neobatrachia</taxon>
        <taxon>Hyloidea</taxon>
        <taxon>Hylidae</taxon>
        <taxon>Phyllomedusinae</taxon>
        <taxon>Phyllomedusa</taxon>
    </lineage>
</organism>
<accession>P84930</accession>
<name>PLS2_PHYTS</name>
<dbReference type="GO" id="GO:0005576">
    <property type="term" value="C:extracellular region"/>
    <property type="evidence" value="ECO:0007669"/>
    <property type="project" value="UniProtKB-SubCell"/>
</dbReference>
<dbReference type="GO" id="GO:0006952">
    <property type="term" value="P:defense response"/>
    <property type="evidence" value="ECO:0007669"/>
    <property type="project" value="UniProtKB-KW"/>
</dbReference>
<keyword id="KW-0027">Amidation</keyword>
<keyword id="KW-0878">Amphibian defense peptide</keyword>
<keyword id="KW-0929">Antimicrobial</keyword>
<keyword id="KW-0903">Direct protein sequencing</keyword>
<keyword id="KW-0964">Secreted</keyword>
<proteinExistence type="evidence at protein level"/>
<sequence length="19" mass="1986">FLSLIPHIATGIAALAKHL</sequence>
<evidence type="ECO:0000250" key="1">
    <source>
        <dbReference type="UniProtKB" id="P84566"/>
    </source>
</evidence>
<evidence type="ECO:0000255" key="2"/>
<evidence type="ECO:0000269" key="3">
    <source ref="1"/>
</evidence>
<evidence type="ECO:0000303" key="4">
    <source ref="1"/>
</evidence>
<evidence type="ECO:0000305" key="5"/>